<organism>
    <name type="scientific">Schizosaccharomyces pombe (strain 972 / ATCC 24843)</name>
    <name type="common">Fission yeast</name>
    <dbReference type="NCBI Taxonomy" id="284812"/>
    <lineage>
        <taxon>Eukaryota</taxon>
        <taxon>Fungi</taxon>
        <taxon>Dikarya</taxon>
        <taxon>Ascomycota</taxon>
        <taxon>Taphrinomycotina</taxon>
        <taxon>Schizosaccharomycetes</taxon>
        <taxon>Schizosaccharomycetales</taxon>
        <taxon>Schizosaccharomycetaceae</taxon>
        <taxon>Schizosaccharomyces</taxon>
    </lineage>
</organism>
<dbReference type="EMBL" id="D49913">
    <property type="protein sequence ID" value="BAA08654.1"/>
    <property type="molecule type" value="Genomic_DNA"/>
</dbReference>
<dbReference type="EMBL" id="CU329671">
    <property type="protein sequence ID" value="CAB75997.1"/>
    <property type="molecule type" value="Genomic_DNA"/>
</dbReference>
<dbReference type="PIR" id="T50335">
    <property type="entry name" value="T50335"/>
</dbReference>
<dbReference type="RefSeq" id="NP_596453.1">
    <property type="nucleotide sequence ID" value="NM_001022372.2"/>
</dbReference>
<dbReference type="SMR" id="P47979"/>
<dbReference type="BioGRID" id="276502">
    <property type="interactions" value="314"/>
</dbReference>
<dbReference type="IntAct" id="P47979">
    <property type="interactions" value="19"/>
</dbReference>
<dbReference type="MINT" id="P47979"/>
<dbReference type="STRING" id="284812.P47979"/>
<dbReference type="iPTMnet" id="P47979"/>
<dbReference type="PaxDb" id="4896-SPBC1718.07c.1"/>
<dbReference type="EnsemblFungi" id="SPBC1718.07c.1">
    <property type="protein sequence ID" value="SPBC1718.07c.1:pep"/>
    <property type="gene ID" value="SPBC1718.07c"/>
</dbReference>
<dbReference type="GeneID" id="2539958"/>
<dbReference type="KEGG" id="spo:2539958"/>
<dbReference type="PomBase" id="SPBC1718.07c">
    <property type="gene designation" value="zfs1"/>
</dbReference>
<dbReference type="VEuPathDB" id="FungiDB:SPBC1718.07c"/>
<dbReference type="eggNOG" id="KOG1677">
    <property type="taxonomic scope" value="Eukaryota"/>
</dbReference>
<dbReference type="HOGENOM" id="CLU_681784_0_0_1"/>
<dbReference type="InParanoid" id="P47979"/>
<dbReference type="OMA" id="CCFLHDE"/>
<dbReference type="Reactome" id="R-SPO-450385">
    <property type="pathway name" value="Butyrate Response Factor 1 (BRF1) binds and destabilizes mRNA"/>
</dbReference>
<dbReference type="Reactome" id="R-SPO-450513">
    <property type="pathway name" value="Tristetraprolin (TTP, ZFP36) binds and destabilizes mRNA"/>
</dbReference>
<dbReference type="PRO" id="PR:P47979"/>
<dbReference type="Proteomes" id="UP000002485">
    <property type="component" value="Chromosome II"/>
</dbReference>
<dbReference type="GO" id="GO:0005829">
    <property type="term" value="C:cytosol"/>
    <property type="evidence" value="ECO:0007005"/>
    <property type="project" value="PomBase"/>
</dbReference>
<dbReference type="GO" id="GO:0005634">
    <property type="term" value="C:nucleus"/>
    <property type="evidence" value="ECO:0000314"/>
    <property type="project" value="PomBase"/>
</dbReference>
<dbReference type="GO" id="GO:1905762">
    <property type="term" value="F:CCR4-NOT complex binding"/>
    <property type="evidence" value="ECO:0000314"/>
    <property type="project" value="PomBase"/>
</dbReference>
<dbReference type="GO" id="GO:0003690">
    <property type="term" value="F:double-stranded DNA binding"/>
    <property type="evidence" value="ECO:0000314"/>
    <property type="project" value="PomBase"/>
</dbReference>
<dbReference type="GO" id="GO:0044692">
    <property type="term" value="F:exoribonuclease activator activity"/>
    <property type="evidence" value="ECO:0000314"/>
    <property type="project" value="PomBase"/>
</dbReference>
<dbReference type="GO" id="GO:0035925">
    <property type="term" value="F:mRNA 3'-UTR AU-rich region binding"/>
    <property type="evidence" value="ECO:0000314"/>
    <property type="project" value="PomBase"/>
</dbReference>
<dbReference type="GO" id="GO:0062104">
    <property type="term" value="F:pumilio-response element binding"/>
    <property type="evidence" value="ECO:0000314"/>
    <property type="project" value="PomBase"/>
</dbReference>
<dbReference type="GO" id="GO:0003723">
    <property type="term" value="F:RNA binding"/>
    <property type="evidence" value="ECO:0000269"/>
    <property type="project" value="PomBase"/>
</dbReference>
<dbReference type="GO" id="GO:0140610">
    <property type="term" value="F:RNA sequestering activity"/>
    <property type="evidence" value="ECO:0000314"/>
    <property type="project" value="PomBase"/>
</dbReference>
<dbReference type="GO" id="GO:0008270">
    <property type="term" value="F:zinc ion binding"/>
    <property type="evidence" value="ECO:0007669"/>
    <property type="project" value="UniProtKB-KW"/>
</dbReference>
<dbReference type="GO" id="GO:0051301">
    <property type="term" value="P:cell division"/>
    <property type="evidence" value="ECO:0007669"/>
    <property type="project" value="UniProtKB-KW"/>
</dbReference>
<dbReference type="GO" id="GO:0031138">
    <property type="term" value="P:negative regulation of conjugation with cellular fusion"/>
    <property type="evidence" value="ECO:0000316"/>
    <property type="project" value="PomBase"/>
</dbReference>
<dbReference type="GO" id="GO:0000956">
    <property type="term" value="P:nuclear-transcribed mRNA catabolic process"/>
    <property type="evidence" value="ECO:0000315"/>
    <property type="project" value="PomBase"/>
</dbReference>
<dbReference type="GO" id="GO:0031139">
    <property type="term" value="P:positive regulation of conjugation with cellular fusion"/>
    <property type="evidence" value="ECO:0000315"/>
    <property type="project" value="PomBase"/>
</dbReference>
<dbReference type="GO" id="GO:0060213">
    <property type="term" value="P:positive regulation of nuclear-transcribed mRNA poly(A) tail shortening"/>
    <property type="evidence" value="ECO:0000314"/>
    <property type="project" value="PomBase"/>
</dbReference>
<dbReference type="GO" id="GO:0110044">
    <property type="term" value="P:regulation of cell cycle switching, mitotic to meiotic cell cycle"/>
    <property type="evidence" value="ECO:0000316"/>
    <property type="project" value="PomBase"/>
</dbReference>
<dbReference type="FunFam" id="4.10.1000.10:FF:000001">
    <property type="entry name" value="zinc finger CCCH domain-containing protein 15-like"/>
    <property type="match status" value="1"/>
</dbReference>
<dbReference type="Gene3D" id="6.10.250.3220">
    <property type="match status" value="1"/>
</dbReference>
<dbReference type="Gene3D" id="4.10.1000.10">
    <property type="entry name" value="Zinc finger, CCCH-type"/>
    <property type="match status" value="1"/>
</dbReference>
<dbReference type="InterPro" id="IPR045877">
    <property type="entry name" value="ZFP36-like"/>
</dbReference>
<dbReference type="InterPro" id="IPR000571">
    <property type="entry name" value="Znf_CCCH"/>
</dbReference>
<dbReference type="InterPro" id="IPR036855">
    <property type="entry name" value="Znf_CCCH_sf"/>
</dbReference>
<dbReference type="PANTHER" id="PTHR12547">
    <property type="entry name" value="CCCH ZINC FINGER/TIS11-RELATED"/>
    <property type="match status" value="1"/>
</dbReference>
<dbReference type="PANTHER" id="PTHR12547:SF18">
    <property type="entry name" value="PROTEIN TIS11"/>
    <property type="match status" value="1"/>
</dbReference>
<dbReference type="Pfam" id="PF00642">
    <property type="entry name" value="zf-CCCH"/>
    <property type="match status" value="2"/>
</dbReference>
<dbReference type="SMART" id="SM00356">
    <property type="entry name" value="ZnF_C3H1"/>
    <property type="match status" value="2"/>
</dbReference>
<dbReference type="SUPFAM" id="SSF90229">
    <property type="entry name" value="CCCH zinc finger"/>
    <property type="match status" value="2"/>
</dbReference>
<dbReference type="PROSITE" id="PS50103">
    <property type="entry name" value="ZF_C3H1"/>
    <property type="match status" value="2"/>
</dbReference>
<keyword id="KW-0131">Cell cycle</keyword>
<keyword id="KW-0132">Cell division</keyword>
<keyword id="KW-0963">Cytoplasm</keyword>
<keyword id="KW-0479">Metal-binding</keyword>
<keyword id="KW-0539">Nucleus</keyword>
<keyword id="KW-1185">Reference proteome</keyword>
<keyword id="KW-0677">Repeat</keyword>
<keyword id="KW-0694">RNA-binding</keyword>
<keyword id="KW-0862">Zinc</keyword>
<keyword id="KW-0863">Zinc-finger</keyword>
<proteinExistence type="evidence at protein level"/>
<protein>
    <recommendedName>
        <fullName>Zinc finger protein zfs1</fullName>
    </recommendedName>
    <alternativeName>
        <fullName>Multicopy suppressor of overexpressed cyr1 protein 4</fullName>
    </alternativeName>
</protein>
<name>ZFS1_SCHPO</name>
<evidence type="ECO:0000255" key="1">
    <source>
        <dbReference type="PROSITE-ProRule" id="PRU00723"/>
    </source>
</evidence>
<evidence type="ECO:0000256" key="2">
    <source>
        <dbReference type="SAM" id="MobiDB-lite"/>
    </source>
</evidence>
<evidence type="ECO:0000269" key="3">
    <source>
    </source>
</evidence>
<evidence type="ECO:0000269" key="4">
    <source>
    </source>
</evidence>
<evidence type="ECO:0000269" key="5">
    <source>
    </source>
</evidence>
<evidence type="ECO:0000269" key="6">
    <source>
    </source>
</evidence>
<evidence type="ECO:0000269" key="7">
    <source>
    </source>
</evidence>
<reference key="1">
    <citation type="journal article" date="1995" name="Mol. Biol. Cell">
        <title>Schizosaccharomyces pombe zfs1+ encoding a zinc-finger protein functions in the mating pheromone recognition pathway.</title>
        <authorList>
            <person name="Kanoh J."/>
            <person name="Sugimoto A."/>
            <person name="Yamamoto M."/>
        </authorList>
    </citation>
    <scope>NUCLEOTIDE SEQUENCE [GENOMIC DNA]</scope>
    <scope>SUBCELLULAR LOCATION</scope>
</reference>
<reference key="2">
    <citation type="journal article" date="2005" name="Curr. Genet.">
        <title>Moc3, a novel Zn finger type protein involved in sexual development, ascus formation, and stress response of Schizosaccharomyces pombe.</title>
        <authorList>
            <person name="Goldar M.M."/>
            <person name="Jeong H.T."/>
            <person name="Tanaka K."/>
            <person name="Matsuda H."/>
            <person name="Kawamukai M."/>
        </authorList>
    </citation>
    <scope>NUCLEOTIDE SEQUENCE [GENOMIC DNA]</scope>
    <scope>FUNCTION</scope>
    <scope>INTERACTION WITH MOC3</scope>
</reference>
<reference key="3">
    <citation type="journal article" date="2002" name="Nature">
        <title>The genome sequence of Schizosaccharomyces pombe.</title>
        <authorList>
            <person name="Wood V."/>
            <person name="Gwilliam R."/>
            <person name="Rajandream M.A."/>
            <person name="Lyne M.H."/>
            <person name="Lyne R."/>
            <person name="Stewart A."/>
            <person name="Sgouros J.G."/>
            <person name="Peat N."/>
            <person name="Hayles J."/>
            <person name="Baker S.G."/>
            <person name="Basham D."/>
            <person name="Bowman S."/>
            <person name="Brooks K."/>
            <person name="Brown D."/>
            <person name="Brown S."/>
            <person name="Chillingworth T."/>
            <person name="Churcher C.M."/>
            <person name="Collins M."/>
            <person name="Connor R."/>
            <person name="Cronin A."/>
            <person name="Davis P."/>
            <person name="Feltwell T."/>
            <person name="Fraser A."/>
            <person name="Gentles S."/>
            <person name="Goble A."/>
            <person name="Hamlin N."/>
            <person name="Harris D.E."/>
            <person name="Hidalgo J."/>
            <person name="Hodgson G."/>
            <person name="Holroyd S."/>
            <person name="Hornsby T."/>
            <person name="Howarth S."/>
            <person name="Huckle E.J."/>
            <person name="Hunt S."/>
            <person name="Jagels K."/>
            <person name="James K.D."/>
            <person name="Jones L."/>
            <person name="Jones M."/>
            <person name="Leather S."/>
            <person name="McDonald S."/>
            <person name="McLean J."/>
            <person name="Mooney P."/>
            <person name="Moule S."/>
            <person name="Mungall K.L."/>
            <person name="Murphy L.D."/>
            <person name="Niblett D."/>
            <person name="Odell C."/>
            <person name="Oliver K."/>
            <person name="O'Neil S."/>
            <person name="Pearson D."/>
            <person name="Quail M.A."/>
            <person name="Rabbinowitsch E."/>
            <person name="Rutherford K.M."/>
            <person name="Rutter S."/>
            <person name="Saunders D."/>
            <person name="Seeger K."/>
            <person name="Sharp S."/>
            <person name="Skelton J."/>
            <person name="Simmonds M.N."/>
            <person name="Squares R."/>
            <person name="Squares S."/>
            <person name="Stevens K."/>
            <person name="Taylor K."/>
            <person name="Taylor R.G."/>
            <person name="Tivey A."/>
            <person name="Walsh S.V."/>
            <person name="Warren T."/>
            <person name="Whitehead S."/>
            <person name="Woodward J.R."/>
            <person name="Volckaert G."/>
            <person name="Aert R."/>
            <person name="Robben J."/>
            <person name="Grymonprez B."/>
            <person name="Weltjens I."/>
            <person name="Vanstreels E."/>
            <person name="Rieger M."/>
            <person name="Schaefer M."/>
            <person name="Mueller-Auer S."/>
            <person name="Gabel C."/>
            <person name="Fuchs M."/>
            <person name="Duesterhoeft A."/>
            <person name="Fritzc C."/>
            <person name="Holzer E."/>
            <person name="Moestl D."/>
            <person name="Hilbert H."/>
            <person name="Borzym K."/>
            <person name="Langer I."/>
            <person name="Beck A."/>
            <person name="Lehrach H."/>
            <person name="Reinhardt R."/>
            <person name="Pohl T.M."/>
            <person name="Eger P."/>
            <person name="Zimmermann W."/>
            <person name="Wedler H."/>
            <person name="Wambutt R."/>
            <person name="Purnelle B."/>
            <person name="Goffeau A."/>
            <person name="Cadieu E."/>
            <person name="Dreano S."/>
            <person name="Gloux S."/>
            <person name="Lelaure V."/>
            <person name="Mottier S."/>
            <person name="Galibert F."/>
            <person name="Aves S.J."/>
            <person name="Xiang Z."/>
            <person name="Hunt C."/>
            <person name="Moore K."/>
            <person name="Hurst S.M."/>
            <person name="Lucas M."/>
            <person name="Rochet M."/>
            <person name="Gaillardin C."/>
            <person name="Tallada V.A."/>
            <person name="Garzon A."/>
            <person name="Thode G."/>
            <person name="Daga R.R."/>
            <person name="Cruzado L."/>
            <person name="Jimenez J."/>
            <person name="Sanchez M."/>
            <person name="del Rey F."/>
            <person name="Benito J."/>
            <person name="Dominguez A."/>
            <person name="Revuelta J.L."/>
            <person name="Moreno S."/>
            <person name="Armstrong J."/>
            <person name="Forsburg S.L."/>
            <person name="Cerutti L."/>
            <person name="Lowe T."/>
            <person name="McCombie W.R."/>
            <person name="Paulsen I."/>
            <person name="Potashkin J."/>
            <person name="Shpakovski G.V."/>
            <person name="Ussery D."/>
            <person name="Barrell B.G."/>
            <person name="Nurse P."/>
        </authorList>
    </citation>
    <scope>NUCLEOTIDE SEQUENCE [LARGE SCALE GENOMIC DNA]</scope>
    <source>
        <strain>972 / ATCC 24843</strain>
    </source>
</reference>
<reference key="4">
    <citation type="journal article" date="1999" name="J. Cell Sci.">
        <title>The S. pombe zfs1 gene is required to prevent septation if mitotic progression is inhibited.</title>
        <authorList>
            <person name="Beltraminelli N."/>
            <person name="Murone M."/>
            <person name="Simanis V."/>
        </authorList>
    </citation>
    <scope>FUNCTION</scope>
</reference>
<reference key="5">
    <citation type="journal article" date="2006" name="Nat. Biotechnol.">
        <title>ORFeome cloning and global analysis of protein localization in the fission yeast Schizosaccharomyces pombe.</title>
        <authorList>
            <person name="Matsuyama A."/>
            <person name="Arai R."/>
            <person name="Yashiroda Y."/>
            <person name="Shirai A."/>
            <person name="Kamata A."/>
            <person name="Sekido S."/>
            <person name="Kobayashi Y."/>
            <person name="Hashimoto A."/>
            <person name="Hamamoto M."/>
            <person name="Hiraoka Y."/>
            <person name="Horinouchi S."/>
            <person name="Yoshida M."/>
        </authorList>
    </citation>
    <scope>SUBCELLULAR LOCATION [LARGE SCALE ANALYSIS]</scope>
</reference>
<reference key="6">
    <citation type="journal article" date="2008" name="J. Biol. Chem.">
        <title>Characterization of zfs1 as an mRNA-binding and -destabilizing protein in Schizosaccharomyces pombe.</title>
        <authorList>
            <person name="Cuthbertson B.J."/>
            <person name="Liao Y."/>
            <person name="Birnbaumer L."/>
            <person name="Blackshear P.J."/>
        </authorList>
    </citation>
    <scope>FUNCTION</scope>
    <scope>MUTAGENESIS OF HIS-351 AND CYS-370</scope>
</reference>
<comment type="function">
    <text evidence="3 4 6">Binds to specific AU-rich elements (ARE) in the 3'-untranslated region of target mRNAs and promotes their degradation. Binds to ARE present in the arz1 mRNA and stimulates the rate of arz1 mRNA decay. Required for coordination of septum formation with exit from mitosis. Involved in the mating response pathway. Induces sexual development and ascus formation.</text>
</comment>
<comment type="subunit">
    <text evidence="4">Interacts with moc3.</text>
</comment>
<comment type="subcellular location">
    <subcellularLocation>
        <location evidence="5">Cytoplasm</location>
    </subcellularLocation>
    <subcellularLocation>
        <location evidence="7">Nucleus</location>
    </subcellularLocation>
</comment>
<accession>P47979</accession>
<gene>
    <name type="primary">zfs1</name>
    <name type="synonym">moc4</name>
    <name type="ORF">SPBC1718.07c</name>
</gene>
<feature type="chain" id="PRO_0000089175" description="Zinc finger protein zfs1">
    <location>
        <begin position="1"/>
        <end position="404"/>
    </location>
</feature>
<feature type="zinc finger region" description="C3H1-type 1" evidence="1">
    <location>
        <begin position="326"/>
        <end position="354"/>
    </location>
</feature>
<feature type="zinc finger region" description="C3H1-type 2" evidence="1">
    <location>
        <begin position="364"/>
        <end position="392"/>
    </location>
</feature>
<feature type="region of interest" description="Disordered" evidence="2">
    <location>
        <begin position="134"/>
        <end position="168"/>
    </location>
</feature>
<feature type="region of interest" description="Disordered" evidence="2">
    <location>
        <begin position="259"/>
        <end position="322"/>
    </location>
</feature>
<feature type="compositionally biased region" description="Polar residues" evidence="2">
    <location>
        <begin position="134"/>
        <end position="149"/>
    </location>
</feature>
<feature type="compositionally biased region" description="Low complexity" evidence="2">
    <location>
        <begin position="150"/>
        <end position="168"/>
    </location>
</feature>
<feature type="compositionally biased region" description="Polar residues" evidence="2">
    <location>
        <begin position="259"/>
        <end position="283"/>
    </location>
</feature>
<feature type="compositionally biased region" description="Low complexity" evidence="2">
    <location>
        <begin position="304"/>
        <end position="317"/>
    </location>
</feature>
<feature type="mutagenesis site" description="Abolishes mRNA binding." evidence="6">
    <original>H</original>
    <variation>I</variation>
    <location>
        <position position="351"/>
    </location>
</feature>
<feature type="mutagenesis site" description="Abolishes mRNA binding." evidence="6">
    <original>C</original>
    <variation>G</variation>
    <location>
        <position position="370"/>
    </location>
</feature>
<sequence length="404" mass="43435">MVYSPMSRPQVPLAFRQWPPYNYKSDPLVNSKLSQSTTSVNAGPSLISPSFLDSYANSSSLLHKPSTNLGSLKTSSLLASDEVFPSSVMPQLRPLDSSLSVSPEMDGWPWHHNSSSNPQGYAWTPSLLSSNATSYLHSGSSPHGNTSNHPSPISSLESLPSRSSTGSGSLDFSGLANLHDDSKSLAMSLNMAGVPVSVDENSQTSFPFVHGQPESTMSRKPKLCVQSKSMTNIRNSVAKPSLVRQSHSAGVIPIKPTASNASIRNAPSNLSKQFSPSGNSPLTEASKPFVPQPSAAGDFRQAKGSASHPHGSGSSNGVAPNGKRALYKTEPCKNWQISGTCRYGSKCQFAHGNQELKEPPRHPKYKSERCRSFMMYGYCPYGLRCCFLHDESNAQKSATIKQSP</sequence>